<sequence length="337" mass="36389">MAIETLYDSDADLTIIQGRKVAIIGYGSQGHAHAMNLRDSGVEVAIGLREGSKSREKAEEAGFKVLTNAEAAKWADVIMLLAPDTSQAAIFTEDIEPNLEDGNALFFGHGLNIHFGLIKPAENITIGMVAPKGPGHLVRRQFVDGKGVPCLIATEQDPKGEGRELTLSYAAAIGGARAGVIPTTFKDETETDLFGEQAVLCGGVEYLIMNGFEVLTEAGYEPEMAYFEVCHELKLIVDLIVEGGIKNMNYSCSDTAEFGGYLSGPRVIDASVKERMKDVLTDIQDGTFVKRLVANVEGGNKELEDLRAKVNSHPIEQTGSQLRDLMSWVKNPLDATA</sequence>
<proteinExistence type="inferred from homology"/>
<evidence type="ECO:0000255" key="1">
    <source>
        <dbReference type="HAMAP-Rule" id="MF_00435"/>
    </source>
</evidence>
<evidence type="ECO:0000255" key="2">
    <source>
        <dbReference type="PROSITE-ProRule" id="PRU01197"/>
    </source>
</evidence>
<evidence type="ECO:0000255" key="3">
    <source>
        <dbReference type="PROSITE-ProRule" id="PRU01198"/>
    </source>
</evidence>
<comment type="function">
    <text evidence="1">Involved in the biosynthesis of branched-chain amino acids (BCAA). Catalyzes an alkyl-migration followed by a ketol-acid reduction of (S)-2-acetolactate (S2AL) to yield (R)-2,3-dihydroxy-isovalerate. In the isomerase reaction, S2AL is rearranged via a Mg-dependent methyl migration to produce 3-hydroxy-3-methyl-2-ketobutyrate (HMKB). In the reductase reaction, this 2-ketoacid undergoes a metal-dependent reduction by NADPH to yield (R)-2,3-dihydroxy-isovalerate.</text>
</comment>
<comment type="catalytic activity">
    <reaction evidence="1">
        <text>(2R)-2,3-dihydroxy-3-methylbutanoate + NADP(+) = (2S)-2-acetolactate + NADPH + H(+)</text>
        <dbReference type="Rhea" id="RHEA:22068"/>
        <dbReference type="ChEBI" id="CHEBI:15378"/>
        <dbReference type="ChEBI" id="CHEBI:49072"/>
        <dbReference type="ChEBI" id="CHEBI:57783"/>
        <dbReference type="ChEBI" id="CHEBI:58349"/>
        <dbReference type="ChEBI" id="CHEBI:58476"/>
        <dbReference type="EC" id="1.1.1.86"/>
    </reaction>
</comment>
<comment type="catalytic activity">
    <reaction evidence="1">
        <text>(2R,3R)-2,3-dihydroxy-3-methylpentanoate + NADP(+) = (S)-2-ethyl-2-hydroxy-3-oxobutanoate + NADPH + H(+)</text>
        <dbReference type="Rhea" id="RHEA:13493"/>
        <dbReference type="ChEBI" id="CHEBI:15378"/>
        <dbReference type="ChEBI" id="CHEBI:49256"/>
        <dbReference type="ChEBI" id="CHEBI:49258"/>
        <dbReference type="ChEBI" id="CHEBI:57783"/>
        <dbReference type="ChEBI" id="CHEBI:58349"/>
        <dbReference type="EC" id="1.1.1.86"/>
    </reaction>
</comment>
<comment type="cofactor">
    <cofactor evidence="1">
        <name>Mg(2+)</name>
        <dbReference type="ChEBI" id="CHEBI:18420"/>
    </cofactor>
    <text evidence="1">Binds 2 magnesium ions per subunit.</text>
</comment>
<comment type="pathway">
    <text evidence="1">Amino-acid biosynthesis; L-isoleucine biosynthesis; L-isoleucine from 2-oxobutanoate: step 2/4.</text>
</comment>
<comment type="pathway">
    <text evidence="1">Amino-acid biosynthesis; L-valine biosynthesis; L-valine from pyruvate: step 2/4.</text>
</comment>
<comment type="similarity">
    <text evidence="1">Belongs to the ketol-acid reductoisomerase family.</text>
</comment>
<organism>
    <name type="scientific">Corynebacterium aurimucosum (strain ATCC 700975 / DSM 44827 / CIP 107346 / CN-1)</name>
    <name type="common">Corynebacterium nigricans</name>
    <dbReference type="NCBI Taxonomy" id="548476"/>
    <lineage>
        <taxon>Bacteria</taxon>
        <taxon>Bacillati</taxon>
        <taxon>Actinomycetota</taxon>
        <taxon>Actinomycetes</taxon>
        <taxon>Mycobacteriales</taxon>
        <taxon>Corynebacteriaceae</taxon>
        <taxon>Corynebacterium</taxon>
    </lineage>
</organism>
<protein>
    <recommendedName>
        <fullName evidence="1">Ketol-acid reductoisomerase (NADP(+))</fullName>
        <shortName evidence="1">KARI</shortName>
        <ecNumber evidence="1">1.1.1.86</ecNumber>
    </recommendedName>
    <alternativeName>
        <fullName evidence="1">Acetohydroxy-acid isomeroreductase</fullName>
        <shortName evidence="1">AHIR</shortName>
    </alternativeName>
    <alternativeName>
        <fullName evidence="1">Alpha-keto-beta-hydroxylacyl reductoisomerase</fullName>
    </alternativeName>
    <alternativeName>
        <fullName evidence="1">Ketol-acid reductoisomerase type 1</fullName>
    </alternativeName>
    <alternativeName>
        <fullName evidence="1">Ketol-acid reductoisomerase type I</fullName>
    </alternativeName>
</protein>
<keyword id="KW-0028">Amino-acid biosynthesis</keyword>
<keyword id="KW-0100">Branched-chain amino acid biosynthesis</keyword>
<keyword id="KW-0460">Magnesium</keyword>
<keyword id="KW-0479">Metal-binding</keyword>
<keyword id="KW-0521">NADP</keyword>
<keyword id="KW-0560">Oxidoreductase</keyword>
<keyword id="KW-1185">Reference proteome</keyword>
<gene>
    <name evidence="1" type="primary">ilvC</name>
    <name type="ordered locus">cauri_1132</name>
</gene>
<reference key="1">
    <citation type="journal article" date="2010" name="BMC Genomics">
        <title>Complete genome sequence and lifestyle of black-pigmented Corynebacterium aurimucosum ATCC 700975 (formerly C. nigricans CN-1) isolated from a vaginal swab of a woman with spontaneous abortion.</title>
        <authorList>
            <person name="Trost E."/>
            <person name="Gotker S."/>
            <person name="Schneider J."/>
            <person name="Schneiker-Bekel S."/>
            <person name="Szczepanowski R."/>
            <person name="Tilker A."/>
            <person name="Viehoever P."/>
            <person name="Arnold W."/>
            <person name="Bekel T."/>
            <person name="Blom J."/>
            <person name="Gartemann K.H."/>
            <person name="Linke B."/>
            <person name="Goesmann A."/>
            <person name="Puhler A."/>
            <person name="Shukla S.K."/>
            <person name="Tauch A."/>
        </authorList>
    </citation>
    <scope>NUCLEOTIDE SEQUENCE [LARGE SCALE GENOMIC DNA]</scope>
    <source>
        <strain>ATCC 700975 / DSM 44827 / CIP 107346 / CN-1</strain>
    </source>
</reference>
<accession>C3PFX1</accession>
<name>ILVC_CORA7</name>
<feature type="chain" id="PRO_1000190937" description="Ketol-acid reductoisomerase (NADP(+))">
    <location>
        <begin position="1"/>
        <end position="337"/>
    </location>
</feature>
<feature type="domain" description="KARI N-terminal Rossmann" evidence="2">
    <location>
        <begin position="1"/>
        <end position="183"/>
    </location>
</feature>
<feature type="domain" description="KARI C-terminal knotted" evidence="3">
    <location>
        <begin position="184"/>
        <end position="329"/>
    </location>
</feature>
<feature type="active site" evidence="1">
    <location>
        <position position="109"/>
    </location>
</feature>
<feature type="binding site" evidence="1">
    <location>
        <begin position="26"/>
        <end position="29"/>
    </location>
    <ligand>
        <name>NADP(+)</name>
        <dbReference type="ChEBI" id="CHEBI:58349"/>
    </ligand>
</feature>
<feature type="binding site" evidence="1">
    <location>
        <position position="49"/>
    </location>
    <ligand>
        <name>NADP(+)</name>
        <dbReference type="ChEBI" id="CHEBI:58349"/>
    </ligand>
</feature>
<feature type="binding site" evidence="1">
    <location>
        <position position="52"/>
    </location>
    <ligand>
        <name>NADP(+)</name>
        <dbReference type="ChEBI" id="CHEBI:58349"/>
    </ligand>
</feature>
<feature type="binding site" evidence="1">
    <location>
        <position position="54"/>
    </location>
    <ligand>
        <name>NADP(+)</name>
        <dbReference type="ChEBI" id="CHEBI:58349"/>
    </ligand>
</feature>
<feature type="binding site" evidence="1">
    <location>
        <begin position="84"/>
        <end position="87"/>
    </location>
    <ligand>
        <name>NADP(+)</name>
        <dbReference type="ChEBI" id="CHEBI:58349"/>
    </ligand>
</feature>
<feature type="binding site" evidence="1">
    <location>
        <position position="135"/>
    </location>
    <ligand>
        <name>NADP(+)</name>
        <dbReference type="ChEBI" id="CHEBI:58349"/>
    </ligand>
</feature>
<feature type="binding site" evidence="1">
    <location>
        <position position="192"/>
    </location>
    <ligand>
        <name>Mg(2+)</name>
        <dbReference type="ChEBI" id="CHEBI:18420"/>
        <label>1</label>
    </ligand>
</feature>
<feature type="binding site" evidence="1">
    <location>
        <position position="192"/>
    </location>
    <ligand>
        <name>Mg(2+)</name>
        <dbReference type="ChEBI" id="CHEBI:18420"/>
        <label>2</label>
    </ligand>
</feature>
<feature type="binding site" evidence="1">
    <location>
        <position position="196"/>
    </location>
    <ligand>
        <name>Mg(2+)</name>
        <dbReference type="ChEBI" id="CHEBI:18420"/>
        <label>1</label>
    </ligand>
</feature>
<feature type="binding site" evidence="1">
    <location>
        <position position="228"/>
    </location>
    <ligand>
        <name>Mg(2+)</name>
        <dbReference type="ChEBI" id="CHEBI:18420"/>
        <label>2</label>
    </ligand>
</feature>
<feature type="binding site" evidence="1">
    <location>
        <position position="232"/>
    </location>
    <ligand>
        <name>Mg(2+)</name>
        <dbReference type="ChEBI" id="CHEBI:18420"/>
        <label>2</label>
    </ligand>
</feature>
<feature type="binding site" evidence="1">
    <location>
        <position position="253"/>
    </location>
    <ligand>
        <name>substrate</name>
    </ligand>
</feature>
<dbReference type="EC" id="1.1.1.86" evidence="1"/>
<dbReference type="EMBL" id="CP001601">
    <property type="protein sequence ID" value="ACP32725.1"/>
    <property type="molecule type" value="Genomic_DNA"/>
</dbReference>
<dbReference type="RefSeq" id="WP_010186905.1">
    <property type="nucleotide sequence ID" value="NZ_ACLH01000005.1"/>
</dbReference>
<dbReference type="SMR" id="C3PFX1"/>
<dbReference type="STRING" id="548476.cauri_1132"/>
<dbReference type="GeneID" id="31923752"/>
<dbReference type="KEGG" id="car:cauri_1132"/>
<dbReference type="eggNOG" id="COG0059">
    <property type="taxonomic scope" value="Bacteria"/>
</dbReference>
<dbReference type="HOGENOM" id="CLU_033821_0_1_11"/>
<dbReference type="OrthoDB" id="9804088at2"/>
<dbReference type="UniPathway" id="UPA00047">
    <property type="reaction ID" value="UER00056"/>
</dbReference>
<dbReference type="UniPathway" id="UPA00049">
    <property type="reaction ID" value="UER00060"/>
</dbReference>
<dbReference type="Proteomes" id="UP000002077">
    <property type="component" value="Chromosome"/>
</dbReference>
<dbReference type="GO" id="GO:0005829">
    <property type="term" value="C:cytosol"/>
    <property type="evidence" value="ECO:0007669"/>
    <property type="project" value="TreeGrafter"/>
</dbReference>
<dbReference type="GO" id="GO:0004455">
    <property type="term" value="F:ketol-acid reductoisomerase activity"/>
    <property type="evidence" value="ECO:0007669"/>
    <property type="project" value="UniProtKB-UniRule"/>
</dbReference>
<dbReference type="GO" id="GO:0000287">
    <property type="term" value="F:magnesium ion binding"/>
    <property type="evidence" value="ECO:0007669"/>
    <property type="project" value="UniProtKB-UniRule"/>
</dbReference>
<dbReference type="GO" id="GO:0050661">
    <property type="term" value="F:NADP binding"/>
    <property type="evidence" value="ECO:0007669"/>
    <property type="project" value="InterPro"/>
</dbReference>
<dbReference type="GO" id="GO:0009097">
    <property type="term" value="P:isoleucine biosynthetic process"/>
    <property type="evidence" value="ECO:0007669"/>
    <property type="project" value="UniProtKB-UniRule"/>
</dbReference>
<dbReference type="GO" id="GO:0009099">
    <property type="term" value="P:L-valine biosynthetic process"/>
    <property type="evidence" value="ECO:0007669"/>
    <property type="project" value="UniProtKB-UniRule"/>
</dbReference>
<dbReference type="FunFam" id="3.40.50.720:FF:000023">
    <property type="entry name" value="Ketol-acid reductoisomerase (NADP(+))"/>
    <property type="match status" value="1"/>
</dbReference>
<dbReference type="Gene3D" id="6.10.240.10">
    <property type="match status" value="1"/>
</dbReference>
<dbReference type="Gene3D" id="3.40.50.720">
    <property type="entry name" value="NAD(P)-binding Rossmann-like Domain"/>
    <property type="match status" value="1"/>
</dbReference>
<dbReference type="HAMAP" id="MF_00435">
    <property type="entry name" value="IlvC"/>
    <property type="match status" value="1"/>
</dbReference>
<dbReference type="InterPro" id="IPR008927">
    <property type="entry name" value="6-PGluconate_DH-like_C_sf"/>
</dbReference>
<dbReference type="InterPro" id="IPR013023">
    <property type="entry name" value="KARI"/>
</dbReference>
<dbReference type="InterPro" id="IPR000506">
    <property type="entry name" value="KARI_C"/>
</dbReference>
<dbReference type="InterPro" id="IPR013116">
    <property type="entry name" value="KARI_N"/>
</dbReference>
<dbReference type="InterPro" id="IPR014359">
    <property type="entry name" value="KARI_prok"/>
</dbReference>
<dbReference type="InterPro" id="IPR036291">
    <property type="entry name" value="NAD(P)-bd_dom_sf"/>
</dbReference>
<dbReference type="NCBIfam" id="TIGR00465">
    <property type="entry name" value="ilvC"/>
    <property type="match status" value="1"/>
</dbReference>
<dbReference type="NCBIfam" id="NF004017">
    <property type="entry name" value="PRK05479.1"/>
    <property type="match status" value="1"/>
</dbReference>
<dbReference type="PANTHER" id="PTHR21371">
    <property type="entry name" value="KETOL-ACID REDUCTOISOMERASE, MITOCHONDRIAL"/>
    <property type="match status" value="1"/>
</dbReference>
<dbReference type="PANTHER" id="PTHR21371:SF1">
    <property type="entry name" value="KETOL-ACID REDUCTOISOMERASE, MITOCHONDRIAL"/>
    <property type="match status" value="1"/>
</dbReference>
<dbReference type="Pfam" id="PF01450">
    <property type="entry name" value="KARI_C"/>
    <property type="match status" value="1"/>
</dbReference>
<dbReference type="Pfam" id="PF07991">
    <property type="entry name" value="KARI_N"/>
    <property type="match status" value="1"/>
</dbReference>
<dbReference type="PIRSF" id="PIRSF000116">
    <property type="entry name" value="IlvC_gammaproteo"/>
    <property type="match status" value="1"/>
</dbReference>
<dbReference type="SUPFAM" id="SSF48179">
    <property type="entry name" value="6-phosphogluconate dehydrogenase C-terminal domain-like"/>
    <property type="match status" value="1"/>
</dbReference>
<dbReference type="SUPFAM" id="SSF51735">
    <property type="entry name" value="NAD(P)-binding Rossmann-fold domains"/>
    <property type="match status" value="1"/>
</dbReference>
<dbReference type="PROSITE" id="PS51851">
    <property type="entry name" value="KARI_C"/>
    <property type="match status" value="1"/>
</dbReference>
<dbReference type="PROSITE" id="PS51850">
    <property type="entry name" value="KARI_N"/>
    <property type="match status" value="1"/>
</dbReference>